<organism>
    <name type="scientific">Prochlorococcus marinus (strain NATL1A)</name>
    <dbReference type="NCBI Taxonomy" id="167555"/>
    <lineage>
        <taxon>Bacteria</taxon>
        <taxon>Bacillati</taxon>
        <taxon>Cyanobacteriota</taxon>
        <taxon>Cyanophyceae</taxon>
        <taxon>Synechococcales</taxon>
        <taxon>Prochlorococcaceae</taxon>
        <taxon>Prochlorococcus</taxon>
    </lineage>
</organism>
<sequence>MQTTDLVRFKKLGKQITVLTAWDAISSSIVEAAGADVVLVGDSLGMVVLGHSTTLPVTLDQMLHHTKAVCRGFCRPLSKQPLVVCDLPFLSYQCGEDKAVEAAGTLLKNSTASAVKLEGAEPETLLVIKRLIRMGIPVMGHLGLTPQSVHQLGYKSQARDKDSQEKIFKDSKMLQESGCFAIVLEHIPAEIASRLKKHIDIPVIGIGAGSDCDGQVRVTADILGLSIAQPPFAKPLLAGRELCINALKEWINSTDLDQVNPTTKTSESKSDC</sequence>
<feature type="chain" id="PRO_0000297328" description="3-methyl-2-oxobutanoate hydroxymethyltransferase">
    <location>
        <begin position="1"/>
        <end position="272"/>
    </location>
</feature>
<feature type="active site" description="Proton acceptor" evidence="1">
    <location>
        <position position="185"/>
    </location>
</feature>
<feature type="binding site" evidence="1">
    <location>
        <begin position="42"/>
        <end position="43"/>
    </location>
    <ligand>
        <name>3-methyl-2-oxobutanoate</name>
        <dbReference type="ChEBI" id="CHEBI:11851"/>
    </ligand>
</feature>
<feature type="binding site" evidence="1">
    <location>
        <position position="42"/>
    </location>
    <ligand>
        <name>Mg(2+)</name>
        <dbReference type="ChEBI" id="CHEBI:18420"/>
    </ligand>
</feature>
<feature type="binding site" evidence="1">
    <location>
        <position position="86"/>
    </location>
    <ligand>
        <name>3-methyl-2-oxobutanoate</name>
        <dbReference type="ChEBI" id="CHEBI:11851"/>
    </ligand>
</feature>
<feature type="binding site" evidence="1">
    <location>
        <position position="86"/>
    </location>
    <ligand>
        <name>Mg(2+)</name>
        <dbReference type="ChEBI" id="CHEBI:18420"/>
    </ligand>
</feature>
<feature type="binding site" evidence="1">
    <location>
        <position position="116"/>
    </location>
    <ligand>
        <name>3-methyl-2-oxobutanoate</name>
        <dbReference type="ChEBI" id="CHEBI:11851"/>
    </ligand>
</feature>
<feature type="binding site" evidence="1">
    <location>
        <position position="118"/>
    </location>
    <ligand>
        <name>Mg(2+)</name>
        <dbReference type="ChEBI" id="CHEBI:18420"/>
    </ligand>
</feature>
<reference key="1">
    <citation type="journal article" date="2007" name="PLoS Genet.">
        <title>Patterns and implications of gene gain and loss in the evolution of Prochlorococcus.</title>
        <authorList>
            <person name="Kettler G.C."/>
            <person name="Martiny A.C."/>
            <person name="Huang K."/>
            <person name="Zucker J."/>
            <person name="Coleman M.L."/>
            <person name="Rodrigue S."/>
            <person name="Chen F."/>
            <person name="Lapidus A."/>
            <person name="Ferriera S."/>
            <person name="Johnson J."/>
            <person name="Steglich C."/>
            <person name="Church G.M."/>
            <person name="Richardson P."/>
            <person name="Chisholm S.W."/>
        </authorList>
    </citation>
    <scope>NUCLEOTIDE SEQUENCE [LARGE SCALE GENOMIC DNA]</scope>
    <source>
        <strain>NATL1A</strain>
    </source>
</reference>
<gene>
    <name evidence="1" type="primary">panB</name>
    <name type="ordered locus">NATL1_17301</name>
</gene>
<comment type="function">
    <text evidence="1">Catalyzes the reversible reaction in which hydroxymethyl group from 5,10-methylenetetrahydrofolate is transferred onto alpha-ketoisovalerate to form ketopantoate.</text>
</comment>
<comment type="catalytic activity">
    <reaction evidence="1">
        <text>3-methyl-2-oxobutanoate + (6R)-5,10-methylene-5,6,7,8-tetrahydrofolate + H2O = 2-dehydropantoate + (6S)-5,6,7,8-tetrahydrofolate</text>
        <dbReference type="Rhea" id="RHEA:11824"/>
        <dbReference type="ChEBI" id="CHEBI:11561"/>
        <dbReference type="ChEBI" id="CHEBI:11851"/>
        <dbReference type="ChEBI" id="CHEBI:15377"/>
        <dbReference type="ChEBI" id="CHEBI:15636"/>
        <dbReference type="ChEBI" id="CHEBI:57453"/>
        <dbReference type="EC" id="2.1.2.11"/>
    </reaction>
</comment>
<comment type="cofactor">
    <cofactor evidence="1">
        <name>Mg(2+)</name>
        <dbReference type="ChEBI" id="CHEBI:18420"/>
    </cofactor>
    <text evidence="1">Binds 1 Mg(2+) ion per subunit.</text>
</comment>
<comment type="pathway">
    <text evidence="1">Cofactor biosynthesis; (R)-pantothenate biosynthesis; (R)-pantoate from 3-methyl-2-oxobutanoate: step 1/2.</text>
</comment>
<comment type="subunit">
    <text evidence="1">Homodecamer; pentamer of dimers.</text>
</comment>
<comment type="subcellular location">
    <subcellularLocation>
        <location evidence="1">Cytoplasm</location>
    </subcellularLocation>
</comment>
<comment type="similarity">
    <text evidence="1">Belongs to the PanB family.</text>
</comment>
<accession>A2C476</accession>
<keyword id="KW-0963">Cytoplasm</keyword>
<keyword id="KW-0460">Magnesium</keyword>
<keyword id="KW-0479">Metal-binding</keyword>
<keyword id="KW-0566">Pantothenate biosynthesis</keyword>
<keyword id="KW-0808">Transferase</keyword>
<proteinExistence type="inferred from homology"/>
<dbReference type="EC" id="2.1.2.11" evidence="1"/>
<dbReference type="EMBL" id="CP000553">
    <property type="protein sequence ID" value="ABM76286.1"/>
    <property type="molecule type" value="Genomic_DNA"/>
</dbReference>
<dbReference type="RefSeq" id="WP_011824286.1">
    <property type="nucleotide sequence ID" value="NC_008819.1"/>
</dbReference>
<dbReference type="SMR" id="A2C476"/>
<dbReference type="KEGG" id="pme:NATL1_17301"/>
<dbReference type="eggNOG" id="COG0413">
    <property type="taxonomic scope" value="Bacteria"/>
</dbReference>
<dbReference type="HOGENOM" id="CLU_036645_1_0_3"/>
<dbReference type="UniPathway" id="UPA00028">
    <property type="reaction ID" value="UER00003"/>
</dbReference>
<dbReference type="Proteomes" id="UP000002592">
    <property type="component" value="Chromosome"/>
</dbReference>
<dbReference type="GO" id="GO:0005737">
    <property type="term" value="C:cytoplasm"/>
    <property type="evidence" value="ECO:0007669"/>
    <property type="project" value="UniProtKB-SubCell"/>
</dbReference>
<dbReference type="GO" id="GO:0003864">
    <property type="term" value="F:3-methyl-2-oxobutanoate hydroxymethyltransferase activity"/>
    <property type="evidence" value="ECO:0007669"/>
    <property type="project" value="UniProtKB-UniRule"/>
</dbReference>
<dbReference type="GO" id="GO:0000287">
    <property type="term" value="F:magnesium ion binding"/>
    <property type="evidence" value="ECO:0007669"/>
    <property type="project" value="TreeGrafter"/>
</dbReference>
<dbReference type="GO" id="GO:0015940">
    <property type="term" value="P:pantothenate biosynthetic process"/>
    <property type="evidence" value="ECO:0007669"/>
    <property type="project" value="UniProtKB-UniRule"/>
</dbReference>
<dbReference type="CDD" id="cd06557">
    <property type="entry name" value="KPHMT-like"/>
    <property type="match status" value="1"/>
</dbReference>
<dbReference type="Gene3D" id="3.20.20.60">
    <property type="entry name" value="Phosphoenolpyruvate-binding domains"/>
    <property type="match status" value="1"/>
</dbReference>
<dbReference type="HAMAP" id="MF_00156">
    <property type="entry name" value="PanB"/>
    <property type="match status" value="1"/>
</dbReference>
<dbReference type="InterPro" id="IPR003700">
    <property type="entry name" value="Pantoate_hydroxy_MeTrfase"/>
</dbReference>
<dbReference type="InterPro" id="IPR015813">
    <property type="entry name" value="Pyrv/PenolPyrv_kinase-like_dom"/>
</dbReference>
<dbReference type="InterPro" id="IPR040442">
    <property type="entry name" value="Pyrv_kinase-like_dom_sf"/>
</dbReference>
<dbReference type="NCBIfam" id="TIGR00222">
    <property type="entry name" value="panB"/>
    <property type="match status" value="1"/>
</dbReference>
<dbReference type="NCBIfam" id="NF001452">
    <property type="entry name" value="PRK00311.1"/>
    <property type="match status" value="1"/>
</dbReference>
<dbReference type="PANTHER" id="PTHR20881">
    <property type="entry name" value="3-METHYL-2-OXOBUTANOATE HYDROXYMETHYLTRANSFERASE"/>
    <property type="match status" value="1"/>
</dbReference>
<dbReference type="PANTHER" id="PTHR20881:SF0">
    <property type="entry name" value="3-METHYL-2-OXOBUTANOATE HYDROXYMETHYLTRANSFERASE"/>
    <property type="match status" value="1"/>
</dbReference>
<dbReference type="Pfam" id="PF02548">
    <property type="entry name" value="Pantoate_transf"/>
    <property type="match status" value="1"/>
</dbReference>
<dbReference type="PIRSF" id="PIRSF000388">
    <property type="entry name" value="Pantoate_hydroxy_MeTrfase"/>
    <property type="match status" value="1"/>
</dbReference>
<dbReference type="SUPFAM" id="SSF51621">
    <property type="entry name" value="Phosphoenolpyruvate/pyruvate domain"/>
    <property type="match status" value="1"/>
</dbReference>
<protein>
    <recommendedName>
        <fullName evidence="1">3-methyl-2-oxobutanoate hydroxymethyltransferase</fullName>
        <ecNumber evidence="1">2.1.2.11</ecNumber>
    </recommendedName>
    <alternativeName>
        <fullName evidence="1">Ketopantoate hydroxymethyltransferase</fullName>
        <shortName evidence="1">KPHMT</shortName>
    </alternativeName>
</protein>
<evidence type="ECO:0000255" key="1">
    <source>
        <dbReference type="HAMAP-Rule" id="MF_00156"/>
    </source>
</evidence>
<name>PANB_PROM1</name>